<comment type="function">
    <text evidence="1">Essential cell division protein. May link together the upstream cell division proteins, which are predominantly cytoplasmic, with the downstream cell division proteins, which are predominantly periplasmic.</text>
</comment>
<comment type="subunit">
    <text evidence="1">Part of a complex composed of FtsB, FtsL and FtsQ.</text>
</comment>
<comment type="subcellular location">
    <subcellularLocation>
        <location evidence="1">Cell inner membrane</location>
        <topology evidence="1">Single-pass type II membrane protein</topology>
    </subcellularLocation>
    <text evidence="1">Localizes to the division septum.</text>
</comment>
<comment type="similarity">
    <text evidence="1">Belongs to the FtsB family.</text>
</comment>
<keyword id="KW-0131">Cell cycle</keyword>
<keyword id="KW-0132">Cell division</keyword>
<keyword id="KW-0997">Cell inner membrane</keyword>
<keyword id="KW-1003">Cell membrane</keyword>
<keyword id="KW-0175">Coiled coil</keyword>
<keyword id="KW-0472">Membrane</keyword>
<keyword id="KW-1185">Reference proteome</keyword>
<keyword id="KW-0812">Transmembrane</keyword>
<keyword id="KW-1133">Transmembrane helix</keyword>
<name>FTSB_ECO24</name>
<dbReference type="EMBL" id="CP000800">
    <property type="protein sequence ID" value="ABV18666.1"/>
    <property type="molecule type" value="Genomic_DNA"/>
</dbReference>
<dbReference type="RefSeq" id="WP_000517476.1">
    <property type="nucleotide sequence ID" value="NC_009801.1"/>
</dbReference>
<dbReference type="SMR" id="A7ZQJ2"/>
<dbReference type="GeneID" id="93779258"/>
<dbReference type="KEGG" id="ecw:EcE24377A_3049"/>
<dbReference type="HOGENOM" id="CLU_134863_5_2_6"/>
<dbReference type="Proteomes" id="UP000001122">
    <property type="component" value="Chromosome"/>
</dbReference>
<dbReference type="GO" id="GO:0032153">
    <property type="term" value="C:cell division site"/>
    <property type="evidence" value="ECO:0007669"/>
    <property type="project" value="UniProtKB-UniRule"/>
</dbReference>
<dbReference type="GO" id="GO:0030428">
    <property type="term" value="C:cell septum"/>
    <property type="evidence" value="ECO:0007669"/>
    <property type="project" value="TreeGrafter"/>
</dbReference>
<dbReference type="GO" id="GO:0005886">
    <property type="term" value="C:plasma membrane"/>
    <property type="evidence" value="ECO:0007669"/>
    <property type="project" value="UniProtKB-SubCell"/>
</dbReference>
<dbReference type="GO" id="GO:0043093">
    <property type="term" value="P:FtsZ-dependent cytokinesis"/>
    <property type="evidence" value="ECO:0007669"/>
    <property type="project" value="UniProtKB-UniRule"/>
</dbReference>
<dbReference type="FunFam" id="1.20.5.400:FF:000001">
    <property type="entry name" value="Cell division protein FtsB"/>
    <property type="match status" value="1"/>
</dbReference>
<dbReference type="Gene3D" id="1.20.5.400">
    <property type="match status" value="1"/>
</dbReference>
<dbReference type="HAMAP" id="MF_00599">
    <property type="entry name" value="FtsB"/>
    <property type="match status" value="1"/>
</dbReference>
<dbReference type="InterPro" id="IPR023081">
    <property type="entry name" value="Cell_div_FtsB"/>
</dbReference>
<dbReference type="InterPro" id="IPR007060">
    <property type="entry name" value="FtsL/DivIC"/>
</dbReference>
<dbReference type="NCBIfam" id="NF002058">
    <property type="entry name" value="PRK00888.1"/>
    <property type="match status" value="1"/>
</dbReference>
<dbReference type="PANTHER" id="PTHR37485">
    <property type="entry name" value="CELL DIVISION PROTEIN FTSB"/>
    <property type="match status" value="1"/>
</dbReference>
<dbReference type="PANTHER" id="PTHR37485:SF1">
    <property type="entry name" value="CELL DIVISION PROTEIN FTSB"/>
    <property type="match status" value="1"/>
</dbReference>
<dbReference type="Pfam" id="PF04977">
    <property type="entry name" value="DivIC"/>
    <property type="match status" value="1"/>
</dbReference>
<proteinExistence type="inferred from homology"/>
<sequence length="103" mass="11622">MGKLTLLLLAILVWLQYSLWFGKNGIHDYTRVNDDVAAQQATNAKLKARNDQLFAEIDDLNGGQEALEERARNELSMTRPGETFYRLVPDASKRAQSAGQNNR</sequence>
<feature type="chain" id="PRO_1000061245" description="Cell division protein FtsB">
    <location>
        <begin position="1"/>
        <end position="103"/>
    </location>
</feature>
<feature type="topological domain" description="Cytoplasmic" evidence="1">
    <location>
        <begin position="1"/>
        <end position="3"/>
    </location>
</feature>
<feature type="transmembrane region" description="Helical" evidence="1">
    <location>
        <begin position="4"/>
        <end position="21"/>
    </location>
</feature>
<feature type="topological domain" description="Periplasmic" evidence="1">
    <location>
        <begin position="22"/>
        <end position="103"/>
    </location>
</feature>
<feature type="coiled-coil region" evidence="1">
    <location>
        <begin position="31"/>
        <end position="71"/>
    </location>
</feature>
<organism>
    <name type="scientific">Escherichia coli O139:H28 (strain E24377A / ETEC)</name>
    <dbReference type="NCBI Taxonomy" id="331111"/>
    <lineage>
        <taxon>Bacteria</taxon>
        <taxon>Pseudomonadati</taxon>
        <taxon>Pseudomonadota</taxon>
        <taxon>Gammaproteobacteria</taxon>
        <taxon>Enterobacterales</taxon>
        <taxon>Enterobacteriaceae</taxon>
        <taxon>Escherichia</taxon>
    </lineage>
</organism>
<gene>
    <name evidence="1" type="primary">ftsB</name>
    <name type="ordered locus">EcE24377A_3049</name>
</gene>
<protein>
    <recommendedName>
        <fullName evidence="1">Cell division protein FtsB</fullName>
    </recommendedName>
</protein>
<reference key="1">
    <citation type="journal article" date="2008" name="J. Bacteriol.">
        <title>The pangenome structure of Escherichia coli: comparative genomic analysis of E. coli commensal and pathogenic isolates.</title>
        <authorList>
            <person name="Rasko D.A."/>
            <person name="Rosovitz M.J."/>
            <person name="Myers G.S.A."/>
            <person name="Mongodin E.F."/>
            <person name="Fricke W.F."/>
            <person name="Gajer P."/>
            <person name="Crabtree J."/>
            <person name="Sebaihia M."/>
            <person name="Thomson N.R."/>
            <person name="Chaudhuri R."/>
            <person name="Henderson I.R."/>
            <person name="Sperandio V."/>
            <person name="Ravel J."/>
        </authorList>
    </citation>
    <scope>NUCLEOTIDE SEQUENCE [LARGE SCALE GENOMIC DNA]</scope>
    <source>
        <strain>E24377A / ETEC</strain>
    </source>
</reference>
<evidence type="ECO:0000255" key="1">
    <source>
        <dbReference type="HAMAP-Rule" id="MF_00599"/>
    </source>
</evidence>
<accession>A7ZQJ2</accession>